<keyword id="KW-0240">DNA-directed RNA polymerase</keyword>
<keyword id="KW-0548">Nucleotidyltransferase</keyword>
<keyword id="KW-0804">Transcription</keyword>
<keyword id="KW-0808">Transferase</keyword>
<proteinExistence type="inferred from homology"/>
<accession>B9KSA1</accession>
<reference key="1">
    <citation type="journal article" date="2009" name="J. Bacteriol.">
        <title>Complete genome sequence of Rhodobacter sphaeroides KD131.</title>
        <authorList>
            <person name="Lim S.-K."/>
            <person name="Kim S.J."/>
            <person name="Cha S.H."/>
            <person name="Oh Y.-K."/>
            <person name="Rhee H.-J."/>
            <person name="Kim M.-S."/>
            <person name="Lee J.K."/>
        </authorList>
    </citation>
    <scope>NUCLEOTIDE SEQUENCE [LARGE SCALE GENOMIC DNA]</scope>
    <source>
        <strain>KD131 / KCTC 12085</strain>
    </source>
</reference>
<feature type="chain" id="PRO_1000194807" description="DNA-directed RNA polymerase subunit omega">
    <location>
        <begin position="1"/>
        <end position="117"/>
    </location>
</feature>
<comment type="function">
    <text evidence="1">Promotes RNA polymerase assembly. Latches the N- and C-terminal regions of the beta' subunit thereby facilitating its interaction with the beta and alpha subunits.</text>
</comment>
<comment type="catalytic activity">
    <reaction evidence="1">
        <text>RNA(n) + a ribonucleoside 5'-triphosphate = RNA(n+1) + diphosphate</text>
        <dbReference type="Rhea" id="RHEA:21248"/>
        <dbReference type="Rhea" id="RHEA-COMP:14527"/>
        <dbReference type="Rhea" id="RHEA-COMP:17342"/>
        <dbReference type="ChEBI" id="CHEBI:33019"/>
        <dbReference type="ChEBI" id="CHEBI:61557"/>
        <dbReference type="ChEBI" id="CHEBI:140395"/>
        <dbReference type="EC" id="2.7.7.6"/>
    </reaction>
</comment>
<comment type="subunit">
    <text evidence="1">The RNAP catalytic core consists of 2 alpha, 1 beta, 1 beta' and 1 omega subunit. When a sigma factor is associated with the core the holoenzyme is formed, which can initiate transcription.</text>
</comment>
<comment type="similarity">
    <text evidence="1">Belongs to the RNA polymerase subunit omega family.</text>
</comment>
<dbReference type="EC" id="2.7.7.6" evidence="1"/>
<dbReference type="EMBL" id="CP001150">
    <property type="protein sequence ID" value="ACM02929.1"/>
    <property type="molecule type" value="Genomic_DNA"/>
</dbReference>
<dbReference type="RefSeq" id="WP_002722412.1">
    <property type="nucleotide sequence ID" value="NC_011963.1"/>
</dbReference>
<dbReference type="SMR" id="B9KSA1"/>
<dbReference type="GeneID" id="67448429"/>
<dbReference type="KEGG" id="rsk:RSKD131_3069"/>
<dbReference type="HOGENOM" id="CLU_125406_2_0_5"/>
<dbReference type="GO" id="GO:0000428">
    <property type="term" value="C:DNA-directed RNA polymerase complex"/>
    <property type="evidence" value="ECO:0007669"/>
    <property type="project" value="UniProtKB-KW"/>
</dbReference>
<dbReference type="GO" id="GO:0003677">
    <property type="term" value="F:DNA binding"/>
    <property type="evidence" value="ECO:0007669"/>
    <property type="project" value="UniProtKB-UniRule"/>
</dbReference>
<dbReference type="GO" id="GO:0003899">
    <property type="term" value="F:DNA-directed RNA polymerase activity"/>
    <property type="evidence" value="ECO:0007669"/>
    <property type="project" value="UniProtKB-UniRule"/>
</dbReference>
<dbReference type="GO" id="GO:0006351">
    <property type="term" value="P:DNA-templated transcription"/>
    <property type="evidence" value="ECO:0007669"/>
    <property type="project" value="UniProtKB-UniRule"/>
</dbReference>
<dbReference type="Gene3D" id="3.90.940.10">
    <property type="match status" value="1"/>
</dbReference>
<dbReference type="HAMAP" id="MF_00366">
    <property type="entry name" value="RNApol_bact_RpoZ"/>
    <property type="match status" value="1"/>
</dbReference>
<dbReference type="InterPro" id="IPR003716">
    <property type="entry name" value="DNA-dir_RNA_pol_omega"/>
</dbReference>
<dbReference type="InterPro" id="IPR006110">
    <property type="entry name" value="Pol_omega/Rpo6/RPB6"/>
</dbReference>
<dbReference type="InterPro" id="IPR036161">
    <property type="entry name" value="RPB6/omega-like_sf"/>
</dbReference>
<dbReference type="NCBIfam" id="TIGR00690">
    <property type="entry name" value="rpoZ"/>
    <property type="match status" value="1"/>
</dbReference>
<dbReference type="PANTHER" id="PTHR34476">
    <property type="entry name" value="DNA-DIRECTED RNA POLYMERASE SUBUNIT OMEGA"/>
    <property type="match status" value="1"/>
</dbReference>
<dbReference type="PANTHER" id="PTHR34476:SF1">
    <property type="entry name" value="DNA-DIRECTED RNA POLYMERASE SUBUNIT OMEGA"/>
    <property type="match status" value="1"/>
</dbReference>
<dbReference type="Pfam" id="PF01192">
    <property type="entry name" value="RNA_pol_Rpb6"/>
    <property type="match status" value="1"/>
</dbReference>
<dbReference type="SMART" id="SM01409">
    <property type="entry name" value="RNA_pol_Rpb6"/>
    <property type="match status" value="1"/>
</dbReference>
<dbReference type="SUPFAM" id="SSF63562">
    <property type="entry name" value="RPB6/omega subunit-like"/>
    <property type="match status" value="1"/>
</dbReference>
<organism>
    <name type="scientific">Cereibacter sphaeroides (strain KD131 / KCTC 12085)</name>
    <name type="common">Rhodobacter sphaeroides</name>
    <dbReference type="NCBI Taxonomy" id="557760"/>
    <lineage>
        <taxon>Bacteria</taxon>
        <taxon>Pseudomonadati</taxon>
        <taxon>Pseudomonadota</taxon>
        <taxon>Alphaproteobacteria</taxon>
        <taxon>Rhodobacterales</taxon>
        <taxon>Paracoccaceae</taxon>
        <taxon>Cereibacter</taxon>
    </lineage>
</organism>
<protein>
    <recommendedName>
        <fullName evidence="1">DNA-directed RNA polymerase subunit omega</fullName>
        <shortName evidence="1">RNAP omega subunit</shortName>
        <ecNumber evidence="1">2.7.7.6</ecNumber>
    </recommendedName>
    <alternativeName>
        <fullName evidence="1">RNA polymerase omega subunit</fullName>
    </alternativeName>
    <alternativeName>
        <fullName evidence="1">Transcriptase subunit omega</fullName>
    </alternativeName>
</protein>
<name>RPOZ_CERSK</name>
<evidence type="ECO:0000255" key="1">
    <source>
        <dbReference type="HAMAP-Rule" id="MF_00366"/>
    </source>
</evidence>
<sequence length="117" mass="13238">MARVTVEDCVDKVPNRFELVMLAAHRAREIASGSSLTIDRDNDKNPVVALREIAEETQSAESLRERMIESHQTQIEVDEPEEDQMALLMGSEVDRPVQDDMSEEKLLRALMEAQGQN</sequence>
<gene>
    <name evidence="1" type="primary">rpoZ</name>
    <name type="ordered locus">RSKD131_3069</name>
</gene>